<sequence>MHSSSSLIKLGFLLLLLNVSLSHAQLSPSFYDKTCPQVFDIATNTIKTALRSDPRIAASILRLHFHDCFVNGCDASILLDNTTSFRTEKDAFGNARSARGFDVIDTMKAAVEKACPKTVSCADLLAIAAQKSVVLAGGPSWKVPSGRRDSLRGFMDLANDNLPGPSSTLQVLKDKFRNVGLDRPSDLVALSGGHTFGKNQCQFIMDRLYNFSNSGKPDPTLDKSYLSTLRKQCPRNGNLSVLVDFDLRTPTIFDNKYYVNLKENKGLIQSDQELFSSPDASDTIPLVRAYADGQGKFFDAFVEAMIRMGNLSPSTGKQGEIRLNCRVVNSKPKIMDVVDTNDFASSI</sequence>
<comment type="function">
    <text>Removal of H(2)O(2), oxidation of toxic reductants, biosynthesis and degradation of lignin, suberization, auxin catabolism, response to environmental stresses such as wounding, pathogen attack and oxidative stress. These functions might be dependent on each isozyme/isoform in each plant tissue.</text>
</comment>
<comment type="catalytic activity">
    <reaction>
        <text>2 a phenolic donor + H2O2 = 2 a phenolic radical donor + 2 H2O</text>
        <dbReference type="Rhea" id="RHEA:56136"/>
        <dbReference type="ChEBI" id="CHEBI:15377"/>
        <dbReference type="ChEBI" id="CHEBI:16240"/>
        <dbReference type="ChEBI" id="CHEBI:139520"/>
        <dbReference type="ChEBI" id="CHEBI:139521"/>
        <dbReference type="EC" id="1.11.1.7"/>
    </reaction>
</comment>
<comment type="cofactor">
    <cofactor>
        <name>Ca(2+)</name>
        <dbReference type="ChEBI" id="CHEBI:29108"/>
    </cofactor>
    <text>Binds 2 calcium ions per subunit.</text>
</comment>
<comment type="cofactor">
    <cofactor>
        <name>heme b</name>
        <dbReference type="ChEBI" id="CHEBI:60344"/>
    </cofactor>
    <text>Binds 1 heme b (iron(II)-protoporphyrin IX) group per subunit.</text>
</comment>
<comment type="subcellular location">
    <subcellularLocation>
        <location evidence="4">Secreted</location>
    </subcellularLocation>
    <subcellularLocation>
        <location evidence="4">Vacuole</location>
    </subcellularLocation>
    <text>Carboxy-terminal extension appears to target the protein to vacuoles.</text>
</comment>
<comment type="similarity">
    <text evidence="2">Belongs to the peroxidase family. Classical plant (class III) peroxidase subfamily.</text>
</comment>
<dbReference type="EC" id="1.11.1.7"/>
<dbReference type="EMBL" id="D90115">
    <property type="protein sequence ID" value="BAA14143.1"/>
    <property type="molecule type" value="Genomic_DNA"/>
</dbReference>
<dbReference type="PIR" id="JH0149">
    <property type="entry name" value="JH0149"/>
</dbReference>
<dbReference type="SMR" id="P17179"/>
<dbReference type="PeroxiBase" id="57">
    <property type="entry name" value="AruPrx02"/>
</dbReference>
<dbReference type="GlyCosmos" id="P17179">
    <property type="glycosylation" value="3 sites, No reported glycans"/>
</dbReference>
<dbReference type="SABIO-RK" id="P17179"/>
<dbReference type="GO" id="GO:0005576">
    <property type="term" value="C:extracellular region"/>
    <property type="evidence" value="ECO:0007669"/>
    <property type="project" value="UniProtKB-SubCell"/>
</dbReference>
<dbReference type="GO" id="GO:0005773">
    <property type="term" value="C:vacuole"/>
    <property type="evidence" value="ECO:0007669"/>
    <property type="project" value="UniProtKB-SubCell"/>
</dbReference>
<dbReference type="GO" id="GO:0020037">
    <property type="term" value="F:heme binding"/>
    <property type="evidence" value="ECO:0007669"/>
    <property type="project" value="InterPro"/>
</dbReference>
<dbReference type="GO" id="GO:0140825">
    <property type="term" value="F:lactoperoxidase activity"/>
    <property type="evidence" value="ECO:0007669"/>
    <property type="project" value="UniProtKB-EC"/>
</dbReference>
<dbReference type="GO" id="GO:0046872">
    <property type="term" value="F:metal ion binding"/>
    <property type="evidence" value="ECO:0007669"/>
    <property type="project" value="UniProtKB-KW"/>
</dbReference>
<dbReference type="GO" id="GO:0042744">
    <property type="term" value="P:hydrogen peroxide catabolic process"/>
    <property type="evidence" value="ECO:0007669"/>
    <property type="project" value="UniProtKB-KW"/>
</dbReference>
<dbReference type="GO" id="GO:0006979">
    <property type="term" value="P:response to oxidative stress"/>
    <property type="evidence" value="ECO:0007669"/>
    <property type="project" value="InterPro"/>
</dbReference>
<dbReference type="CDD" id="cd00693">
    <property type="entry name" value="secretory_peroxidase"/>
    <property type="match status" value="1"/>
</dbReference>
<dbReference type="FunFam" id="1.10.420.10:FF:000001">
    <property type="entry name" value="Peroxidase"/>
    <property type="match status" value="1"/>
</dbReference>
<dbReference type="FunFam" id="1.10.520.10:FF:000001">
    <property type="entry name" value="Peroxidase"/>
    <property type="match status" value="1"/>
</dbReference>
<dbReference type="Gene3D" id="1.10.520.10">
    <property type="match status" value="1"/>
</dbReference>
<dbReference type="Gene3D" id="1.10.420.10">
    <property type="entry name" value="Peroxidase, domain 2"/>
    <property type="match status" value="1"/>
</dbReference>
<dbReference type="InterPro" id="IPR002016">
    <property type="entry name" value="Haem_peroxidase"/>
</dbReference>
<dbReference type="InterPro" id="IPR010255">
    <property type="entry name" value="Haem_peroxidase_sf"/>
</dbReference>
<dbReference type="InterPro" id="IPR000823">
    <property type="entry name" value="Peroxidase_pln"/>
</dbReference>
<dbReference type="InterPro" id="IPR019794">
    <property type="entry name" value="Peroxidases_AS"/>
</dbReference>
<dbReference type="InterPro" id="IPR019793">
    <property type="entry name" value="Peroxidases_heam-ligand_BS"/>
</dbReference>
<dbReference type="InterPro" id="IPR033905">
    <property type="entry name" value="Secretory_peroxidase"/>
</dbReference>
<dbReference type="PANTHER" id="PTHR31388:SF113">
    <property type="entry name" value="PEROXIDASE 37-RELATED"/>
    <property type="match status" value="1"/>
</dbReference>
<dbReference type="PANTHER" id="PTHR31388">
    <property type="entry name" value="PEROXIDASE 72-RELATED"/>
    <property type="match status" value="1"/>
</dbReference>
<dbReference type="Pfam" id="PF00141">
    <property type="entry name" value="peroxidase"/>
    <property type="match status" value="1"/>
</dbReference>
<dbReference type="PRINTS" id="PR00458">
    <property type="entry name" value="PEROXIDASE"/>
</dbReference>
<dbReference type="PRINTS" id="PR00461">
    <property type="entry name" value="PLPEROXIDASE"/>
</dbReference>
<dbReference type="SUPFAM" id="SSF48113">
    <property type="entry name" value="Heme-dependent peroxidases"/>
    <property type="match status" value="1"/>
</dbReference>
<dbReference type="PROSITE" id="PS00435">
    <property type="entry name" value="PEROXIDASE_1"/>
    <property type="match status" value="1"/>
</dbReference>
<dbReference type="PROSITE" id="PS00436">
    <property type="entry name" value="PEROXIDASE_2"/>
    <property type="match status" value="1"/>
</dbReference>
<dbReference type="PROSITE" id="PS50873">
    <property type="entry name" value="PEROXIDASE_4"/>
    <property type="match status" value="1"/>
</dbReference>
<accession>P17179</accession>
<protein>
    <recommendedName>
        <fullName>Peroxidase C2</fullName>
        <ecNumber>1.11.1.7</ecNumber>
    </recommendedName>
</protein>
<reference key="1">
    <citation type="journal article" date="1990" name="Gene">
        <title>Genomic DNA structure of two new horseradish-peroxidase-encoding genes.</title>
        <authorList>
            <person name="Fujiyama K."/>
            <person name="Takemura H."/>
            <person name="Shinmyo A."/>
            <person name="Okada H."/>
            <person name="Takano M."/>
        </authorList>
    </citation>
    <scope>NUCLEOTIDE SEQUENCE [GENOMIC DNA]</scope>
</reference>
<organism>
    <name type="scientific">Armoracia rusticana</name>
    <name type="common">Horseradish</name>
    <name type="synonym">Armoracia laphatifolia</name>
    <dbReference type="NCBI Taxonomy" id="3704"/>
    <lineage>
        <taxon>Eukaryota</taxon>
        <taxon>Viridiplantae</taxon>
        <taxon>Streptophyta</taxon>
        <taxon>Embryophyta</taxon>
        <taxon>Tracheophyta</taxon>
        <taxon>Spermatophyta</taxon>
        <taxon>Magnoliopsida</taxon>
        <taxon>eudicotyledons</taxon>
        <taxon>Gunneridae</taxon>
        <taxon>Pentapetalae</taxon>
        <taxon>rosids</taxon>
        <taxon>malvids</taxon>
        <taxon>Brassicales</taxon>
        <taxon>Brassicaceae</taxon>
        <taxon>Cardamineae</taxon>
        <taxon>Armoracia</taxon>
    </lineage>
</organism>
<gene>
    <name type="primary">PRXC2</name>
</gene>
<name>PER2_ARMRU</name>
<evidence type="ECO:0000255" key="1"/>
<evidence type="ECO:0000255" key="2">
    <source>
        <dbReference type="PROSITE-ProRule" id="PRU00297"/>
    </source>
</evidence>
<evidence type="ECO:0000255" key="3">
    <source>
        <dbReference type="PROSITE-ProRule" id="PRU10012"/>
    </source>
</evidence>
<evidence type="ECO:0000305" key="4"/>
<feature type="signal peptide">
    <location>
        <begin position="1"/>
        <end position="24"/>
    </location>
</feature>
<feature type="chain" id="PRO_0000023743" description="Peroxidase C2">
    <location>
        <begin position="25"/>
        <end position="347"/>
    </location>
</feature>
<feature type="active site" description="Proton acceptor" evidence="2 3">
    <location>
        <position position="66"/>
    </location>
</feature>
<feature type="binding site" evidence="2">
    <location>
        <position position="67"/>
    </location>
    <ligand>
        <name>Ca(2+)</name>
        <dbReference type="ChEBI" id="CHEBI:29108"/>
        <label>1</label>
    </ligand>
</feature>
<feature type="binding site" evidence="2">
    <location>
        <position position="70"/>
    </location>
    <ligand>
        <name>Ca(2+)</name>
        <dbReference type="ChEBI" id="CHEBI:29108"/>
        <label>1</label>
    </ligand>
</feature>
<feature type="binding site" evidence="2">
    <location>
        <position position="72"/>
    </location>
    <ligand>
        <name>Ca(2+)</name>
        <dbReference type="ChEBI" id="CHEBI:29108"/>
        <label>1</label>
    </ligand>
</feature>
<feature type="binding site" evidence="2">
    <location>
        <position position="74"/>
    </location>
    <ligand>
        <name>Ca(2+)</name>
        <dbReference type="ChEBI" id="CHEBI:29108"/>
        <label>1</label>
    </ligand>
</feature>
<feature type="binding site" evidence="2">
    <location>
        <position position="76"/>
    </location>
    <ligand>
        <name>Ca(2+)</name>
        <dbReference type="ChEBI" id="CHEBI:29108"/>
        <label>1</label>
    </ligand>
</feature>
<feature type="binding site" evidence="2">
    <location>
        <position position="163"/>
    </location>
    <ligand>
        <name>substrate</name>
    </ligand>
</feature>
<feature type="binding site" description="axial binding residue" evidence="2">
    <location>
        <position position="194"/>
    </location>
    <ligand>
        <name>heme b</name>
        <dbReference type="ChEBI" id="CHEBI:60344"/>
    </ligand>
    <ligandPart>
        <name>Fe</name>
        <dbReference type="ChEBI" id="CHEBI:18248"/>
    </ligandPart>
</feature>
<feature type="binding site" evidence="2">
    <location>
        <position position="195"/>
    </location>
    <ligand>
        <name>Ca(2+)</name>
        <dbReference type="ChEBI" id="CHEBI:29108"/>
        <label>2</label>
    </ligand>
</feature>
<feature type="binding site" evidence="2">
    <location>
        <position position="246"/>
    </location>
    <ligand>
        <name>Ca(2+)</name>
        <dbReference type="ChEBI" id="CHEBI:29108"/>
        <label>2</label>
    </ligand>
</feature>
<feature type="binding site" evidence="2">
    <location>
        <position position="249"/>
    </location>
    <ligand>
        <name>Ca(2+)</name>
        <dbReference type="ChEBI" id="CHEBI:29108"/>
        <label>2</label>
    </ligand>
</feature>
<feature type="binding site" evidence="2">
    <location>
        <position position="254"/>
    </location>
    <ligand>
        <name>Ca(2+)</name>
        <dbReference type="ChEBI" id="CHEBI:29108"/>
        <label>2</label>
    </ligand>
</feature>
<feature type="site" description="Transition state stabilizer" evidence="2">
    <location>
        <position position="62"/>
    </location>
</feature>
<feature type="glycosylation site" description="N-linked (GlcNAc...) asparagine" evidence="1">
    <location>
        <position position="81"/>
    </location>
</feature>
<feature type="glycosylation site" description="N-linked (GlcNAc...) asparagine" evidence="1">
    <location>
        <position position="210"/>
    </location>
</feature>
<feature type="glycosylation site" description="N-linked (GlcNAc...) asparagine" evidence="1">
    <location>
        <position position="238"/>
    </location>
</feature>
<feature type="disulfide bond" evidence="2">
    <location>
        <begin position="35"/>
        <end position="115"/>
    </location>
</feature>
<feature type="disulfide bond" evidence="2">
    <location>
        <begin position="68"/>
        <end position="73"/>
    </location>
</feature>
<feature type="disulfide bond" evidence="2">
    <location>
        <begin position="121"/>
        <end position="325"/>
    </location>
</feature>
<feature type="disulfide bond" evidence="2">
    <location>
        <begin position="201"/>
        <end position="233"/>
    </location>
</feature>
<keyword id="KW-0106">Calcium</keyword>
<keyword id="KW-1015">Disulfide bond</keyword>
<keyword id="KW-0325">Glycoprotein</keyword>
<keyword id="KW-0349">Heme</keyword>
<keyword id="KW-0376">Hydrogen peroxide</keyword>
<keyword id="KW-0408">Iron</keyword>
<keyword id="KW-0479">Metal-binding</keyword>
<keyword id="KW-0560">Oxidoreductase</keyword>
<keyword id="KW-0575">Peroxidase</keyword>
<keyword id="KW-0964">Secreted</keyword>
<keyword id="KW-0732">Signal</keyword>
<keyword id="KW-0926">Vacuole</keyword>
<proteinExistence type="inferred from homology"/>